<gene>
    <name evidence="2" type="primary">AOC3</name>
</gene>
<comment type="function">
    <text evidence="2">Catalyzes the oxidative deamination of primary amines to the corresponding aldehydes with the concomitant production of hydrogen peroxide and ammonia. Has a preference for the primary monoamines methylamine and benzylamine. Could also act on 2-phenylethylamine but much less efficiently. At endothelial cells surface can also function as a cell adhesion protein that participates in lymphocyte extravasation and recirculation by mediating the binding of lymphocytes to peripheral lymph node vascular endothelial cells in an L-selectin-independent fashion.</text>
</comment>
<comment type="catalytic activity">
    <reaction evidence="2">
        <text>methylamine + O2 + H2O = formaldehyde + H2O2 + NH4(+)</text>
        <dbReference type="Rhea" id="RHEA:59420"/>
        <dbReference type="ChEBI" id="CHEBI:15377"/>
        <dbReference type="ChEBI" id="CHEBI:15379"/>
        <dbReference type="ChEBI" id="CHEBI:16240"/>
        <dbReference type="ChEBI" id="CHEBI:16842"/>
        <dbReference type="ChEBI" id="CHEBI:28938"/>
        <dbReference type="ChEBI" id="CHEBI:59338"/>
    </reaction>
    <physiologicalReaction direction="left-to-right" evidence="2">
        <dbReference type="Rhea" id="RHEA:59421"/>
    </physiologicalReaction>
</comment>
<comment type="catalytic activity">
    <reaction evidence="2">
        <text>benzylamine + O2 + H2O = benzaldehyde + H2O2 + NH4(+)</text>
        <dbReference type="Rhea" id="RHEA:59424"/>
        <dbReference type="ChEBI" id="CHEBI:15377"/>
        <dbReference type="ChEBI" id="CHEBI:15379"/>
        <dbReference type="ChEBI" id="CHEBI:16240"/>
        <dbReference type="ChEBI" id="CHEBI:17169"/>
        <dbReference type="ChEBI" id="CHEBI:28938"/>
        <dbReference type="ChEBI" id="CHEBI:225238"/>
    </reaction>
    <physiologicalReaction direction="left-to-right" evidence="2">
        <dbReference type="Rhea" id="RHEA:59425"/>
    </physiologicalReaction>
</comment>
<comment type="catalytic activity">
    <reaction evidence="2">
        <text>2-phenylethylamine + O2 + H2O = 2-phenylacetaldehyde + H2O2 + NH4(+)</text>
        <dbReference type="Rhea" id="RHEA:25265"/>
        <dbReference type="ChEBI" id="CHEBI:15377"/>
        <dbReference type="ChEBI" id="CHEBI:15379"/>
        <dbReference type="ChEBI" id="CHEBI:16240"/>
        <dbReference type="ChEBI" id="CHEBI:16424"/>
        <dbReference type="ChEBI" id="CHEBI:28938"/>
        <dbReference type="ChEBI" id="CHEBI:225237"/>
        <dbReference type="EC" id="1.4.3.21"/>
    </reaction>
    <physiologicalReaction direction="left-to-right" evidence="2">
        <dbReference type="Rhea" id="RHEA:25266"/>
    </physiologicalReaction>
</comment>
<comment type="cofactor">
    <cofactor evidence="2">
        <name>Cu(2+)</name>
        <dbReference type="ChEBI" id="CHEBI:29036"/>
    </cofactor>
    <text evidence="2">Binds 1 copper ion per subunit.</text>
</comment>
<comment type="cofactor">
    <cofactor evidence="2">
        <name>Ca(2+)</name>
        <dbReference type="ChEBI" id="CHEBI:29108"/>
    </cofactor>
    <text evidence="2">Binds 2 calcium ions per subunit.</text>
</comment>
<comment type="cofactor">
    <cofactor evidence="2">
        <name>L-topaquinone</name>
        <dbReference type="ChEBI" id="CHEBI:79027"/>
    </cofactor>
    <text evidence="2">Contains 1 topaquinone per subunit.</text>
</comment>
<comment type="subunit">
    <text evidence="2">Homodimer; disulfide-linked. Probably forms heterodimers with AOC2.</text>
</comment>
<comment type="subcellular location">
    <subcellularLocation>
        <location evidence="2">Cell membrane</location>
        <topology evidence="2">Single-pass type II membrane protein</topology>
    </subcellularLocation>
</comment>
<comment type="alternative products">
    <event type="alternative splicing"/>
    <isoform>
        <id>Q9TTK6-1</id>
        <name>1</name>
        <sequence type="displayed"/>
    </isoform>
    <isoform>
        <id>Q9TTK6-2</id>
        <name>2</name>
        <sequence type="described" ref="VSP_016603"/>
    </isoform>
</comment>
<comment type="PTM">
    <text evidence="2">Topaquinone (TPQ) is generated by copper-dependent autoxidation of a specific tyrosyl residue.</text>
</comment>
<comment type="PTM">
    <text evidence="2">N- and O-glycosylated.</text>
</comment>
<comment type="similarity">
    <text evidence="5">Belongs to the copper/topaquinone oxidase family.</text>
</comment>
<organism>
    <name type="scientific">Bos taurus</name>
    <name type="common">Bovine</name>
    <dbReference type="NCBI Taxonomy" id="9913"/>
    <lineage>
        <taxon>Eukaryota</taxon>
        <taxon>Metazoa</taxon>
        <taxon>Chordata</taxon>
        <taxon>Craniata</taxon>
        <taxon>Vertebrata</taxon>
        <taxon>Euteleostomi</taxon>
        <taxon>Mammalia</taxon>
        <taxon>Eutheria</taxon>
        <taxon>Laurasiatheria</taxon>
        <taxon>Artiodactyla</taxon>
        <taxon>Ruminantia</taxon>
        <taxon>Pecora</taxon>
        <taxon>Bovidae</taxon>
        <taxon>Bovinae</taxon>
        <taxon>Bos</taxon>
    </lineage>
</organism>
<evidence type="ECO:0000250" key="1">
    <source>
        <dbReference type="UniProtKB" id="P19801"/>
    </source>
</evidence>
<evidence type="ECO:0000250" key="2">
    <source>
        <dbReference type="UniProtKB" id="Q16853"/>
    </source>
</evidence>
<evidence type="ECO:0000255" key="3"/>
<evidence type="ECO:0000303" key="4">
    <source>
    </source>
</evidence>
<evidence type="ECO:0000305" key="5"/>
<protein>
    <recommendedName>
        <fullName evidence="2">Amine oxidase [copper-containing] 3</fullName>
        <ecNumber evidence="2">1.4.3.21</ecNumber>
    </recommendedName>
    <alternativeName>
        <fullName>Copper amine oxidase</fullName>
    </alternativeName>
    <alternativeName>
        <fullName>Semicarbazide-sensitive amine oxidase</fullName>
        <shortName>SSAO</shortName>
    </alternativeName>
    <alternativeName>
        <fullName>Vascular adhesion protein 1</fullName>
        <shortName>VAP-1</shortName>
    </alternativeName>
</protein>
<name>AOC3_BOVIN</name>
<proteinExistence type="evidence at transcript level"/>
<sequence>MNQKTTLVLLALAVITIFALVCVLIAGRGGDGGEASQPHYCPSGTPSVQPWTHPGQNQLFADLSREELTAVMSFLTQKLGPDLVDAAQARPSDNCIFSVELQLPPKAAALAHLDRRSPPPAREALAIVFFGGQPQPNVTELVVGPLPQPSYMRDVTVERHGGPLPYYRRPVLLREYLDIDQMIFNRELPQAAGVLHHCCSYKQGGGNLVTMTTAPRGLQSGDRATWFGLYYNISGAGYYLHPVGLELLVDHKALDPAQWTIQKVFFQGRYYESLAQLEEQFEAGRVNVVVIPNNGTGGSWSLKSQVPPGPTPPLQFHPQGTRFSVQGSRVTSSLWTFSFGLGAFSGPRIFDIRFQGERLAYEISLQEAVAIYGGNTPAAMLTRYMDGCFGMGKFATPLTRGVDCPYLATYVDWHFLLESQAPRTLHDAFCVFEQNKGLPLRRHHSDFISQYFGGVVETVLVFRSVSTLLNYDYVWDMVFHPNGAIEVKFHATGYISSAFFFGTAQKYGNQVRENTLGTVHTHSAHYKVDLDVGGLENWVWAEDMAFVPTTVPWSPEHQIQRLQVTRKQLETEEQAAFPLGGASPRYLYLASKQSNKWGHPRGYRIQTVSFAGRPLPQNSSTERAISWGRYQLAVTQRKETEPSSSSVFNQNDPWTPTVDFADFINNETIAGKDLVAWVTAGFLHIPHAEDIPNTVTVGNGVGFFLRPYNFFDEDPSINSADSIYFQKHQDAGSCEVNSLACLPKDPACAPDLPAFSHGGFFTN</sequence>
<dbReference type="EC" id="1.4.3.21" evidence="2"/>
<dbReference type="EMBL" id="AB019242">
    <property type="protein sequence ID" value="BAA88896.1"/>
    <property type="molecule type" value="mRNA"/>
</dbReference>
<dbReference type="EMBL" id="BT021702">
    <property type="protein sequence ID" value="AAX46549.1"/>
    <property type="molecule type" value="mRNA"/>
</dbReference>
<dbReference type="EMBL" id="BC140657">
    <property type="protein sequence ID" value="AAI40658.1"/>
    <property type="molecule type" value="mRNA"/>
</dbReference>
<dbReference type="RefSeq" id="NP_851345.1">
    <molecule id="Q9TTK6-1"/>
    <property type="nucleotide sequence ID" value="NM_181002.3"/>
</dbReference>
<dbReference type="SMR" id="Q9TTK6"/>
<dbReference type="FunCoup" id="Q9TTK6">
    <property type="interactions" value="175"/>
</dbReference>
<dbReference type="STRING" id="9913.ENSBTAP00000047520"/>
<dbReference type="BindingDB" id="Q9TTK6"/>
<dbReference type="ChEMBL" id="CHEMBL3265"/>
<dbReference type="GlyCosmos" id="Q9TTK6">
    <property type="glycosylation" value="6 sites, No reported glycans"/>
</dbReference>
<dbReference type="GlyGen" id="Q9TTK6">
    <property type="glycosylation" value="5 sites"/>
</dbReference>
<dbReference type="PaxDb" id="9913-ENSBTAP00000047520"/>
<dbReference type="PeptideAtlas" id="Q9TTK6"/>
<dbReference type="Ensembl" id="ENSBTAT00000042831.5">
    <molecule id="Q9TTK6-1"/>
    <property type="protein sequence ID" value="ENSBTAP00000040442.4"/>
    <property type="gene ID" value="ENSBTAG00000030333.5"/>
</dbReference>
<dbReference type="GeneID" id="281002"/>
<dbReference type="KEGG" id="bta:281002"/>
<dbReference type="CTD" id="8639"/>
<dbReference type="VEuPathDB" id="HostDB:ENSBTAG00000030333"/>
<dbReference type="eggNOG" id="KOG1186">
    <property type="taxonomic scope" value="Eukaryota"/>
</dbReference>
<dbReference type="GeneTree" id="ENSGT00950000183207"/>
<dbReference type="InParanoid" id="Q9TTK6"/>
<dbReference type="OMA" id="SSMWNMN"/>
<dbReference type="OrthoDB" id="5379943at2759"/>
<dbReference type="Reactome" id="R-BTA-211945">
    <property type="pathway name" value="Phase I - Functionalization of compounds"/>
</dbReference>
<dbReference type="SABIO-RK" id="Q9TTK6"/>
<dbReference type="Proteomes" id="UP000009136">
    <property type="component" value="Chromosome 19"/>
</dbReference>
<dbReference type="Bgee" id="ENSBTAG00000030333">
    <property type="expression patterns" value="Expressed in mammary gland fat and 101 other cell types or tissues"/>
</dbReference>
<dbReference type="GO" id="GO:0009986">
    <property type="term" value="C:cell surface"/>
    <property type="evidence" value="ECO:0000250"/>
    <property type="project" value="UniProtKB"/>
</dbReference>
<dbReference type="GO" id="GO:0005769">
    <property type="term" value="C:early endosome"/>
    <property type="evidence" value="ECO:0000318"/>
    <property type="project" value="GO_Central"/>
</dbReference>
<dbReference type="GO" id="GO:0005783">
    <property type="term" value="C:endoplasmic reticulum"/>
    <property type="evidence" value="ECO:0000318"/>
    <property type="project" value="GO_Central"/>
</dbReference>
<dbReference type="GO" id="GO:0005794">
    <property type="term" value="C:Golgi apparatus"/>
    <property type="evidence" value="ECO:0000318"/>
    <property type="project" value="GO_Central"/>
</dbReference>
<dbReference type="GO" id="GO:0016020">
    <property type="term" value="C:membrane"/>
    <property type="evidence" value="ECO:0000250"/>
    <property type="project" value="UniProtKB"/>
</dbReference>
<dbReference type="GO" id="GO:0005886">
    <property type="term" value="C:plasma membrane"/>
    <property type="evidence" value="ECO:0000250"/>
    <property type="project" value="UniProtKB"/>
</dbReference>
<dbReference type="GO" id="GO:0005507">
    <property type="term" value="F:copper ion binding"/>
    <property type="evidence" value="ECO:0000318"/>
    <property type="project" value="GO_Central"/>
</dbReference>
<dbReference type="GO" id="GO:0008131">
    <property type="term" value="F:primary methylamine oxidase activity"/>
    <property type="evidence" value="ECO:0000250"/>
    <property type="project" value="UniProtKB"/>
</dbReference>
<dbReference type="GO" id="GO:0048038">
    <property type="term" value="F:quinone binding"/>
    <property type="evidence" value="ECO:0000250"/>
    <property type="project" value="UniProtKB"/>
</dbReference>
<dbReference type="GO" id="GO:0009308">
    <property type="term" value="P:amine metabolic process"/>
    <property type="evidence" value="ECO:0000250"/>
    <property type="project" value="UniProtKB"/>
</dbReference>
<dbReference type="GO" id="GO:0007155">
    <property type="term" value="P:cell adhesion"/>
    <property type="evidence" value="ECO:0000250"/>
    <property type="project" value="UniProtKB"/>
</dbReference>
<dbReference type="FunFam" id="2.70.98.20:FF:000003">
    <property type="entry name" value="Amine oxidase"/>
    <property type="match status" value="1"/>
</dbReference>
<dbReference type="FunFam" id="3.10.450.40:FF:000001">
    <property type="entry name" value="Amine oxidase"/>
    <property type="match status" value="1"/>
</dbReference>
<dbReference type="FunFam" id="3.10.450.40:FF:000003">
    <property type="entry name" value="Amine oxidase"/>
    <property type="match status" value="1"/>
</dbReference>
<dbReference type="Gene3D" id="3.10.450.40">
    <property type="match status" value="2"/>
</dbReference>
<dbReference type="Gene3D" id="2.70.98.20">
    <property type="entry name" value="Copper amine oxidase, catalytic domain"/>
    <property type="match status" value="1"/>
</dbReference>
<dbReference type="InterPro" id="IPR049947">
    <property type="entry name" value="Cu_Am_Ox_Cu-bd"/>
</dbReference>
<dbReference type="InterPro" id="IPR049948">
    <property type="entry name" value="Cu_Am_ox_TPQ-bd"/>
</dbReference>
<dbReference type="InterPro" id="IPR000269">
    <property type="entry name" value="Cu_amine_oxidase"/>
</dbReference>
<dbReference type="InterPro" id="IPR015798">
    <property type="entry name" value="Cu_amine_oxidase_C"/>
</dbReference>
<dbReference type="InterPro" id="IPR036460">
    <property type="entry name" value="Cu_amine_oxidase_C_sf"/>
</dbReference>
<dbReference type="InterPro" id="IPR016182">
    <property type="entry name" value="Cu_amine_oxidase_N-reg"/>
</dbReference>
<dbReference type="InterPro" id="IPR015800">
    <property type="entry name" value="Cu_amine_oxidase_N2"/>
</dbReference>
<dbReference type="InterPro" id="IPR015802">
    <property type="entry name" value="Cu_amine_oxidase_N3"/>
</dbReference>
<dbReference type="PANTHER" id="PTHR10638">
    <property type="entry name" value="COPPER AMINE OXIDASE"/>
    <property type="match status" value="1"/>
</dbReference>
<dbReference type="PANTHER" id="PTHR10638:SF23">
    <property type="entry name" value="MEMBRANE PRIMARY AMINE OXIDASE"/>
    <property type="match status" value="1"/>
</dbReference>
<dbReference type="Pfam" id="PF01179">
    <property type="entry name" value="Cu_amine_oxid"/>
    <property type="match status" value="1"/>
</dbReference>
<dbReference type="Pfam" id="PF02727">
    <property type="entry name" value="Cu_amine_oxidN2"/>
    <property type="match status" value="1"/>
</dbReference>
<dbReference type="Pfam" id="PF02728">
    <property type="entry name" value="Cu_amine_oxidN3"/>
    <property type="match status" value="1"/>
</dbReference>
<dbReference type="PRINTS" id="PR00766">
    <property type="entry name" value="CUDAOXIDASE"/>
</dbReference>
<dbReference type="SUPFAM" id="SSF49998">
    <property type="entry name" value="Amine oxidase catalytic domain"/>
    <property type="match status" value="1"/>
</dbReference>
<dbReference type="SUPFAM" id="SSF54416">
    <property type="entry name" value="Amine oxidase N-terminal region"/>
    <property type="match status" value="2"/>
</dbReference>
<dbReference type="PROSITE" id="PS01164">
    <property type="entry name" value="COPPER_AMINE_OXID_1"/>
    <property type="match status" value="1"/>
</dbReference>
<dbReference type="PROSITE" id="PS01165">
    <property type="entry name" value="COPPER_AMINE_OXID_2"/>
    <property type="match status" value="1"/>
</dbReference>
<feature type="chain" id="PRO_0000064101" description="Amine oxidase [copper-containing] 3">
    <location>
        <begin position="1"/>
        <end position="763"/>
    </location>
</feature>
<feature type="topological domain" description="Cytoplasmic" evidence="3">
    <location>
        <begin position="1"/>
        <end position="6"/>
    </location>
</feature>
<feature type="transmembrane region" description="Helical; Signal-anchor for type II membrane protein" evidence="3">
    <location>
        <begin position="7"/>
        <end position="27"/>
    </location>
</feature>
<feature type="topological domain" description="Extracellular" evidence="3">
    <location>
        <begin position="28"/>
        <end position="763"/>
    </location>
</feature>
<feature type="active site" description="Proton acceptor" evidence="1">
    <location>
        <position position="386"/>
    </location>
</feature>
<feature type="active site" description="Schiff-base intermediate with substrate; via topaquinone" evidence="2">
    <location>
        <position position="471"/>
    </location>
</feature>
<feature type="binding site" evidence="2">
    <location>
        <position position="520"/>
    </location>
    <ligand>
        <name>Cu(2+)</name>
        <dbReference type="ChEBI" id="CHEBI:29036"/>
    </ligand>
</feature>
<feature type="binding site" evidence="2">
    <location>
        <position position="522"/>
    </location>
    <ligand>
        <name>Cu(2+)</name>
        <dbReference type="ChEBI" id="CHEBI:29036"/>
    </ligand>
</feature>
<feature type="binding site" evidence="2">
    <location>
        <position position="529"/>
    </location>
    <ligand>
        <name>Ca(2+)</name>
        <dbReference type="ChEBI" id="CHEBI:29108"/>
        <label>1</label>
    </ligand>
</feature>
<feature type="binding site" evidence="2">
    <location>
        <position position="530"/>
    </location>
    <ligand>
        <name>Ca(2+)</name>
        <dbReference type="ChEBI" id="CHEBI:29108"/>
        <label>1</label>
    </ligand>
</feature>
<feature type="binding site" evidence="2">
    <location>
        <position position="531"/>
    </location>
    <ligand>
        <name>Ca(2+)</name>
        <dbReference type="ChEBI" id="CHEBI:29108"/>
        <label>1</label>
    </ligand>
</feature>
<feature type="binding site" evidence="2">
    <location>
        <position position="572"/>
    </location>
    <ligand>
        <name>Ca(2+)</name>
        <dbReference type="ChEBI" id="CHEBI:29108"/>
        <label>2</label>
    </ligand>
</feature>
<feature type="binding site" evidence="2">
    <location>
        <position position="641"/>
    </location>
    <ligand>
        <name>Ca(2+)</name>
        <dbReference type="ChEBI" id="CHEBI:29108"/>
        <label>2</label>
    </ligand>
</feature>
<feature type="binding site" evidence="2">
    <location>
        <position position="663"/>
    </location>
    <ligand>
        <name>Ca(2+)</name>
        <dbReference type="ChEBI" id="CHEBI:29108"/>
        <label>2</label>
    </ligand>
</feature>
<feature type="binding site" evidence="2">
    <location>
        <position position="665"/>
    </location>
    <ligand>
        <name>Ca(2+)</name>
        <dbReference type="ChEBI" id="CHEBI:29108"/>
        <label>2</label>
    </ligand>
</feature>
<feature type="binding site" evidence="2">
    <location>
        <position position="667"/>
    </location>
    <ligand>
        <name>Ca(2+)</name>
        <dbReference type="ChEBI" id="CHEBI:29108"/>
        <label>2</label>
    </ligand>
</feature>
<feature type="binding site" evidence="2">
    <location>
        <position position="673"/>
    </location>
    <ligand>
        <name>Ca(2+)</name>
        <dbReference type="ChEBI" id="CHEBI:29108"/>
        <label>1</label>
    </ligand>
</feature>
<feature type="binding site" evidence="2">
    <location>
        <position position="674"/>
    </location>
    <ligand>
        <name>Ca(2+)</name>
        <dbReference type="ChEBI" id="CHEBI:29108"/>
        <label>1</label>
    </ligand>
</feature>
<feature type="binding site" evidence="2">
    <location>
        <position position="684"/>
    </location>
    <ligand>
        <name>Cu(2+)</name>
        <dbReference type="ChEBI" id="CHEBI:29036"/>
    </ligand>
</feature>
<feature type="modified residue" description="2',4',5'-topaquinone" evidence="2">
    <location>
        <position position="471"/>
    </location>
</feature>
<feature type="glycosylation site" description="N-linked (GlcNAc...) asparagine" evidence="3">
    <location>
        <position position="137"/>
    </location>
</feature>
<feature type="glycosylation site" description="N-linked (GlcNAc...) asparagine" evidence="3">
    <location>
        <position position="232"/>
    </location>
</feature>
<feature type="glycosylation site" description="N-linked (GlcNAc...) asparagine" evidence="3">
    <location>
        <position position="294"/>
    </location>
</feature>
<feature type="glycosylation site" description="N-linked (GlcNAc...) asparagine" evidence="3">
    <location>
        <position position="618"/>
    </location>
</feature>
<feature type="glycosylation site" description="N-linked (GlcNAc...) asparagine" evidence="3">
    <location>
        <position position="666"/>
    </location>
</feature>
<feature type="disulfide bond" evidence="2">
    <location>
        <begin position="198"/>
        <end position="199"/>
    </location>
</feature>
<feature type="disulfide bond" evidence="2">
    <location>
        <begin position="404"/>
        <end position="430"/>
    </location>
</feature>
<feature type="disulfide bond" evidence="2">
    <location>
        <begin position="734"/>
        <end position="741"/>
    </location>
</feature>
<feature type="disulfide bond" description="Interchain" evidence="2">
    <location>
        <position position="748"/>
    </location>
</feature>
<feature type="splice variant" id="VSP_016603" description="In isoform 2." evidence="4">
    <original>CEVNSLACLPKDPACAPDLPAFSHGGFFTN</original>
    <variation>SMLPESGASQLCAPQLAGFLSQRRGTVSQEAGVMVTRFYKTPRCIFRRHG</variation>
    <location>
        <begin position="734"/>
        <end position="763"/>
    </location>
</feature>
<feature type="sequence conflict" description="In Ref. 2; AAX46549." evidence="5" ref="2">
    <original>D</original>
    <variation>H</variation>
    <location>
        <position position="178"/>
    </location>
</feature>
<reference key="1">
    <citation type="submission" date="1998-10" db="EMBL/GenBank/DDBJ databases">
        <title>Molecular cloning of semicarbazide-sensitive amine oxidase gene from Bovine aorta.</title>
        <authorList>
            <person name="Iwabuki H."/>
            <person name="Matsumura K."/>
            <person name="Mure M."/>
            <person name="Kuroda S."/>
            <person name="Tanizawa K."/>
        </authorList>
    </citation>
    <scope>NUCLEOTIDE SEQUENCE [MRNA] (ISOFORM 1)</scope>
</reference>
<reference key="2">
    <citation type="journal article" date="2005" name="BMC Genomics">
        <title>Characterization of 954 bovine full-CDS cDNA sequences.</title>
        <authorList>
            <person name="Harhay G.P."/>
            <person name="Sonstegard T.S."/>
            <person name="Keele J.W."/>
            <person name="Heaton M.P."/>
            <person name="Clawson M.L."/>
            <person name="Snelling W.M."/>
            <person name="Wiedmann R.T."/>
            <person name="Van Tassell C.P."/>
            <person name="Smith T.P.L."/>
        </authorList>
    </citation>
    <scope>NUCLEOTIDE SEQUENCE [LARGE SCALE MRNA] (ISOFORM 2)</scope>
</reference>
<reference key="3">
    <citation type="submission" date="2007-04" db="EMBL/GenBank/DDBJ databases">
        <authorList>
            <consortium name="NIH - Mammalian Gene Collection (MGC) project"/>
        </authorList>
    </citation>
    <scope>NUCLEOTIDE SEQUENCE [LARGE SCALE MRNA] (ISOFORM 1)</scope>
    <source>
        <strain>Hereford</strain>
        <tissue>Fetal liver</tissue>
    </source>
</reference>
<accession>Q9TTK6</accession>
<accession>A5D7R7</accession>
<accession>Q58D95</accession>
<keyword id="KW-0025">Alternative splicing</keyword>
<keyword id="KW-0106">Calcium</keyword>
<keyword id="KW-0130">Cell adhesion</keyword>
<keyword id="KW-1003">Cell membrane</keyword>
<keyword id="KW-0186">Copper</keyword>
<keyword id="KW-1015">Disulfide bond</keyword>
<keyword id="KW-0325">Glycoprotein</keyword>
<keyword id="KW-0472">Membrane</keyword>
<keyword id="KW-0479">Metal-binding</keyword>
<keyword id="KW-0560">Oxidoreductase</keyword>
<keyword id="KW-1185">Reference proteome</keyword>
<keyword id="KW-0735">Signal-anchor</keyword>
<keyword id="KW-0801">TPQ</keyword>
<keyword id="KW-0812">Transmembrane</keyword>
<keyword id="KW-1133">Transmembrane helix</keyword>